<proteinExistence type="predicted"/>
<protein>
    <recommendedName>
        <fullName>Uncharacterized 20.3 kDa protein in HE65-PK2 intergenic region</fullName>
    </recommendedName>
</protein>
<organism>
    <name type="scientific">Autographa californica nuclear polyhedrosis virus</name>
    <name type="common">AcMNPV</name>
    <dbReference type="NCBI Taxonomy" id="46015"/>
    <lineage>
        <taxon>Viruses</taxon>
        <taxon>Viruses incertae sedis</taxon>
        <taxon>Naldaviricetes</taxon>
        <taxon>Lefavirales</taxon>
        <taxon>Baculoviridae</taxon>
        <taxon>Alphabaculovirus</taxon>
        <taxon>Alphabaculovirus aucalifornicae</taxon>
    </lineage>
</organism>
<dbReference type="EMBL" id="L22858">
    <property type="protein sequence ID" value="AAA66743.1"/>
    <property type="molecule type" value="Genomic_DNA"/>
</dbReference>
<dbReference type="PIR" id="B72864">
    <property type="entry name" value="B72864"/>
</dbReference>
<dbReference type="RefSeq" id="NP_054143.1">
    <property type="nucleotide sequence ID" value="NC_001623.1"/>
</dbReference>
<dbReference type="GeneID" id="1403946"/>
<dbReference type="KEGG" id="vg:1403946"/>
<dbReference type="OrthoDB" id="14008at10239"/>
<dbReference type="Proteomes" id="UP000008292">
    <property type="component" value="Segment"/>
</dbReference>
<dbReference type="InterPro" id="IPR020387">
    <property type="entry name" value="AcMNPV_Orf112"/>
</dbReference>
<dbReference type="Pfam" id="PF10860">
    <property type="entry name" value="DUF2661"/>
    <property type="match status" value="1"/>
</dbReference>
<sequence length="169" mass="20290">MKVTAMLNPHLLDVAYNYLLLMDMDCVVQSVQWKQLSTDTYCFEPFYDSQIKWLYAPKSGQSFDSYLENYATLIRVKQVQQHRKELILHCVDFLTMKANDNFMVFKNYINMIIKVYLQFYNYRFPINFEDNTMKPCVNLTFRRGGSWKTQLQPVCNYVYKSKNMPKFIK</sequence>
<feature type="chain" id="PRO_0000133050" description="Uncharacterized 20.3 kDa protein in HE65-PK2 intergenic region">
    <location>
        <begin position="1"/>
        <end position="169"/>
    </location>
</feature>
<accession>P41666</accession>
<name>Y113_NPVAC</name>
<keyword id="KW-1185">Reference proteome</keyword>
<organismHost>
    <name type="scientific">Lepidoptera</name>
    <name type="common">butterflies and moths</name>
    <dbReference type="NCBI Taxonomy" id="7088"/>
</organismHost>
<reference key="1">
    <citation type="journal article" date="1994" name="Virology">
        <title>The complete DNA sequence of Autographa californica nuclear polyhedrosis virus.</title>
        <authorList>
            <person name="Ayres M.D."/>
            <person name="Howard S.C."/>
            <person name="Kuzio J."/>
            <person name="Lopez-Ferber M."/>
            <person name="Possee R.D."/>
        </authorList>
    </citation>
    <scope>NUCLEOTIDE SEQUENCE [LARGE SCALE GENOMIC DNA]</scope>
    <source>
        <strain>C6</strain>
    </source>
</reference>